<accession>Q10XE8</accession>
<keyword id="KW-0378">Hydrolase</keyword>
<sequence length="138" mass="16144">MSFYYRRIVHFQDTDAAGVVYFVNVLAICHEAYEASLAAFDINLKVFFSNQEIAIPIIHANVDFRRPMFCGDELTIELMPKTWGDDEFEISYQVFLKEVGKKWAARASTKHVCIHPQSKSRQKLSDEIRRWLLSFQTF</sequence>
<comment type="function">
    <text evidence="1">Catalyzes the hydrolysis of 1,4-dihydroxy-2-naphthoyl-CoA (DHNA-CoA) to 1,4-dihydroxy-2-naphthoate (DHNA), a reaction involved in phylloquinone (vitamin K1) biosynthesis.</text>
</comment>
<comment type="catalytic activity">
    <reaction evidence="1">
        <text>1,4-dihydroxy-2-naphthoyl-CoA + H2O = 1,4-dihydroxy-2-naphthoate + CoA + H(+)</text>
        <dbReference type="Rhea" id="RHEA:26309"/>
        <dbReference type="ChEBI" id="CHEBI:11173"/>
        <dbReference type="ChEBI" id="CHEBI:15377"/>
        <dbReference type="ChEBI" id="CHEBI:15378"/>
        <dbReference type="ChEBI" id="CHEBI:57287"/>
        <dbReference type="ChEBI" id="CHEBI:58897"/>
        <dbReference type="EC" id="3.1.2.28"/>
    </reaction>
</comment>
<comment type="pathway">
    <text evidence="1">Cofactor biosynthesis; phylloquinone biosynthesis.</text>
</comment>
<comment type="pathway">
    <text evidence="1">Quinol/quinone metabolism; 1,4-dihydroxy-2-naphthoate biosynthesis; 1,4-dihydroxy-2-naphthoate from chorismate: step 7/7.</text>
</comment>
<comment type="similarity">
    <text evidence="1">Belongs to the 4-hydroxybenzoyl-CoA thioesterase family. DHNA-CoA hydrolase subfamily.</text>
</comment>
<dbReference type="EC" id="3.1.2.28" evidence="1"/>
<dbReference type="EMBL" id="CP000393">
    <property type="protein sequence ID" value="ABG53076.1"/>
    <property type="molecule type" value="Genomic_DNA"/>
</dbReference>
<dbReference type="RefSeq" id="WP_011613406.1">
    <property type="nucleotide sequence ID" value="NC_008312.1"/>
</dbReference>
<dbReference type="SMR" id="Q10XE8"/>
<dbReference type="STRING" id="203124.Tery_4064"/>
<dbReference type="KEGG" id="ter:Tery_4064"/>
<dbReference type="eggNOG" id="COG0824">
    <property type="taxonomic scope" value="Bacteria"/>
</dbReference>
<dbReference type="HOGENOM" id="CLU_101141_5_3_3"/>
<dbReference type="OrthoDB" id="9800856at2"/>
<dbReference type="UniPathway" id="UPA00995"/>
<dbReference type="UniPathway" id="UPA01057">
    <property type="reaction ID" value="UER01033"/>
</dbReference>
<dbReference type="GO" id="GO:0061522">
    <property type="term" value="F:1,4-dihydroxy-2-naphthoyl-CoA thioesterase activity"/>
    <property type="evidence" value="ECO:0007669"/>
    <property type="project" value="UniProtKB-EC"/>
</dbReference>
<dbReference type="GO" id="GO:0042372">
    <property type="term" value="P:phylloquinone biosynthetic process"/>
    <property type="evidence" value="ECO:0007669"/>
    <property type="project" value="UniProtKB-UniRule"/>
</dbReference>
<dbReference type="CDD" id="cd00586">
    <property type="entry name" value="4HBT"/>
    <property type="match status" value="1"/>
</dbReference>
<dbReference type="Gene3D" id="3.10.129.10">
    <property type="entry name" value="Hotdog Thioesterase"/>
    <property type="match status" value="1"/>
</dbReference>
<dbReference type="HAMAP" id="MF_02101">
    <property type="entry name" value="DHNA_CoA_hydrolase"/>
    <property type="match status" value="1"/>
</dbReference>
<dbReference type="InterPro" id="IPR022829">
    <property type="entry name" value="DHNA_CoA_hydrolase"/>
</dbReference>
<dbReference type="InterPro" id="IPR029069">
    <property type="entry name" value="HotDog_dom_sf"/>
</dbReference>
<dbReference type="Pfam" id="PF13279">
    <property type="entry name" value="4HBT_2"/>
    <property type="match status" value="1"/>
</dbReference>
<dbReference type="SUPFAM" id="SSF54637">
    <property type="entry name" value="Thioesterase/thiol ester dehydrase-isomerase"/>
    <property type="match status" value="1"/>
</dbReference>
<protein>
    <recommendedName>
        <fullName evidence="1">1,4-dihydroxy-2-naphthoyl-CoA hydrolase</fullName>
        <shortName evidence="1">DHNA-CoA hydrolase</shortName>
        <ecNumber evidence="1">3.1.2.28</ecNumber>
    </recommendedName>
    <alternativeName>
        <fullName evidence="1">DHNA-CoA thioesterase</fullName>
    </alternativeName>
</protein>
<evidence type="ECO:0000255" key="1">
    <source>
        <dbReference type="HAMAP-Rule" id="MF_02101"/>
    </source>
</evidence>
<gene>
    <name type="ordered locus">Tery_4064</name>
</gene>
<name>DNCH_TRIEI</name>
<reference key="1">
    <citation type="journal article" date="2015" name="Proc. Natl. Acad. Sci. U.S.A.">
        <title>Trichodesmium genome maintains abundant, widespread noncoding DNA in situ, despite oligotrophic lifestyle.</title>
        <authorList>
            <person name="Walworth N."/>
            <person name="Pfreundt U."/>
            <person name="Nelson W.C."/>
            <person name="Mincer T."/>
            <person name="Heidelberg J.F."/>
            <person name="Fu F."/>
            <person name="Waterbury J.B."/>
            <person name="Glavina del Rio T."/>
            <person name="Goodwin L."/>
            <person name="Kyrpides N.C."/>
            <person name="Land M.L."/>
            <person name="Woyke T."/>
            <person name="Hutchins D.A."/>
            <person name="Hess W.R."/>
            <person name="Webb E.A."/>
        </authorList>
    </citation>
    <scope>NUCLEOTIDE SEQUENCE [LARGE SCALE GENOMIC DNA]</scope>
    <source>
        <strain>IMS101</strain>
    </source>
</reference>
<organism>
    <name type="scientific">Trichodesmium erythraeum (strain IMS101)</name>
    <dbReference type="NCBI Taxonomy" id="203124"/>
    <lineage>
        <taxon>Bacteria</taxon>
        <taxon>Bacillati</taxon>
        <taxon>Cyanobacteriota</taxon>
        <taxon>Cyanophyceae</taxon>
        <taxon>Oscillatoriophycideae</taxon>
        <taxon>Oscillatoriales</taxon>
        <taxon>Microcoleaceae</taxon>
        <taxon>Trichodesmium</taxon>
    </lineage>
</organism>
<proteinExistence type="inferred from homology"/>
<feature type="chain" id="PRO_0000377037" description="1,4-dihydroxy-2-naphthoyl-CoA hydrolase">
    <location>
        <begin position="1"/>
        <end position="138"/>
    </location>
</feature>
<feature type="active site" evidence="1">
    <location>
        <position position="15"/>
    </location>
</feature>